<reference key="1">
    <citation type="submission" date="1998-08" db="EMBL/GenBank/DDBJ databases">
        <title>Mouse laminin 12 gamma 3 chain.</title>
        <authorList>
            <person name="Albus A.M."/>
            <person name="Burgeson B."/>
            <person name="Champliaud M.-F."/>
            <person name="Koch M."/>
            <person name="Olson P."/>
        </authorList>
    </citation>
    <scope>NUCLEOTIDE SEQUENCE [MRNA]</scope>
</reference>
<reference key="2">
    <citation type="journal article" date="2009" name="PLoS Biol.">
        <title>Lineage-specific biology revealed by a finished genome assembly of the mouse.</title>
        <authorList>
            <person name="Church D.M."/>
            <person name="Goodstadt L."/>
            <person name="Hillier L.W."/>
            <person name="Zody M.C."/>
            <person name="Goldstein S."/>
            <person name="She X."/>
            <person name="Bult C.J."/>
            <person name="Agarwala R."/>
            <person name="Cherry J.L."/>
            <person name="DiCuccio M."/>
            <person name="Hlavina W."/>
            <person name="Kapustin Y."/>
            <person name="Meric P."/>
            <person name="Maglott D."/>
            <person name="Birtle Z."/>
            <person name="Marques A.C."/>
            <person name="Graves T."/>
            <person name="Zhou S."/>
            <person name="Teague B."/>
            <person name="Potamousis K."/>
            <person name="Churas C."/>
            <person name="Place M."/>
            <person name="Herschleb J."/>
            <person name="Runnheim R."/>
            <person name="Forrest D."/>
            <person name="Amos-Landgraf J."/>
            <person name="Schwartz D.C."/>
            <person name="Cheng Z."/>
            <person name="Lindblad-Toh K."/>
            <person name="Eichler E.E."/>
            <person name="Ponting C.P."/>
        </authorList>
    </citation>
    <scope>NUCLEOTIDE SEQUENCE [LARGE SCALE GENOMIC DNA]</scope>
    <source>
        <strain>C57BL/6J</strain>
    </source>
</reference>
<reference key="3">
    <citation type="submission" date="2005-07" db="EMBL/GenBank/DDBJ databases">
        <authorList>
            <person name="Mural R.J."/>
            <person name="Adams M.D."/>
            <person name="Myers E.W."/>
            <person name="Smith H.O."/>
            <person name="Venter J.C."/>
        </authorList>
    </citation>
    <scope>NUCLEOTIDE SEQUENCE [LARGE SCALE GENOMIC DNA]</scope>
</reference>
<reference key="4">
    <citation type="journal article" date="2004" name="Genome Res.">
        <title>The status, quality, and expansion of the NIH full-length cDNA project: the Mammalian Gene Collection (MGC).</title>
        <authorList>
            <consortium name="The MGC Project Team"/>
        </authorList>
    </citation>
    <scope>NUCLEOTIDE SEQUENCE [LARGE SCALE MRNA]</scope>
    <source>
        <strain>FVB/N</strain>
        <tissue>Mammary tumor</tissue>
    </source>
</reference>
<reference key="5">
    <citation type="journal article" date="1999" name="J. Biol. Chem.">
        <title>Molecular cloning and tissue-specific expression of a novel murine laminin gamma3 chain.</title>
        <authorList>
            <person name="Iivanainen A."/>
            <person name="Morita T."/>
            <person name="Tryggvason K."/>
        </authorList>
    </citation>
    <scope>NUCLEOTIDE SEQUENCE [MRNA] OF 1-1526</scope>
</reference>
<reference key="6">
    <citation type="journal article" date="2010" name="Cell">
        <title>A tissue-specific atlas of mouse protein phosphorylation and expression.</title>
        <authorList>
            <person name="Huttlin E.L."/>
            <person name="Jedrychowski M.P."/>
            <person name="Elias J.E."/>
            <person name="Goswami T."/>
            <person name="Rad R."/>
            <person name="Beausoleil S.A."/>
            <person name="Villen J."/>
            <person name="Haas W."/>
            <person name="Sowa M.E."/>
            <person name="Gygi S.P."/>
        </authorList>
    </citation>
    <scope>IDENTIFICATION BY MASS SPECTROMETRY [LARGE SCALE ANALYSIS]</scope>
    <source>
        <tissue>Kidney</tissue>
        <tissue>Testis</tissue>
    </source>
</reference>
<dbReference type="EMBL" id="AF083372">
    <property type="protein sequence ID" value="AAF08983.1"/>
    <property type="molecule type" value="mRNA"/>
</dbReference>
<dbReference type="EMBL" id="AL928893">
    <property type="status" value="NOT_ANNOTATED_CDS"/>
    <property type="molecule type" value="Genomic_DNA"/>
</dbReference>
<dbReference type="EMBL" id="BX511243">
    <property type="status" value="NOT_ANNOTATED_CDS"/>
    <property type="molecule type" value="Genomic_DNA"/>
</dbReference>
<dbReference type="EMBL" id="CH466542">
    <property type="protein sequence ID" value="EDL08519.1"/>
    <property type="molecule type" value="Genomic_DNA"/>
</dbReference>
<dbReference type="EMBL" id="BC096366">
    <property type="protein sequence ID" value="AAH96366.1"/>
    <property type="molecule type" value="mRNA"/>
</dbReference>
<dbReference type="EMBL" id="AF079520">
    <property type="protein sequence ID" value="AAD29851.1"/>
    <property type="molecule type" value="mRNA"/>
</dbReference>
<dbReference type="CCDS" id="CCDS15903.1"/>
<dbReference type="RefSeq" id="NP_035966.2">
    <property type="nucleotide sequence ID" value="NM_011836.4"/>
</dbReference>
<dbReference type="SMR" id="Q9R0B6"/>
<dbReference type="BioGRID" id="204801">
    <property type="interactions" value="1"/>
</dbReference>
<dbReference type="ComplexPortal" id="CPX-3018">
    <property type="entry name" value="Laminin-213 complex"/>
</dbReference>
<dbReference type="ComplexPortal" id="CPX-3019">
    <property type="entry name" value="Laminin-423 complex"/>
</dbReference>
<dbReference type="ComplexPortal" id="CPX-3021">
    <property type="entry name" value="Laminin-523 complex"/>
</dbReference>
<dbReference type="FunCoup" id="Q9R0B6">
    <property type="interactions" value="422"/>
</dbReference>
<dbReference type="STRING" id="10090.ENSMUSP00000028187"/>
<dbReference type="GlyConnect" id="2462">
    <property type="glycosylation" value="1 N-Linked glycan (2 sites)"/>
</dbReference>
<dbReference type="GlyCosmos" id="Q9R0B6">
    <property type="glycosylation" value="10 sites, 1 glycan"/>
</dbReference>
<dbReference type="GlyGen" id="Q9R0B6">
    <property type="glycosylation" value="10 sites, 6 N-linked glycans (8 sites)"/>
</dbReference>
<dbReference type="iPTMnet" id="Q9R0B6"/>
<dbReference type="PhosphoSitePlus" id="Q9R0B6"/>
<dbReference type="PaxDb" id="10090-ENSMUSP00000028187"/>
<dbReference type="ProteomicsDB" id="264912"/>
<dbReference type="Antibodypedia" id="45184">
    <property type="antibodies" value="142 antibodies from 24 providers"/>
</dbReference>
<dbReference type="DNASU" id="23928"/>
<dbReference type="Ensembl" id="ENSMUST00000028187.7">
    <property type="protein sequence ID" value="ENSMUSP00000028187.7"/>
    <property type="gene ID" value="ENSMUSG00000026840.15"/>
</dbReference>
<dbReference type="GeneID" id="23928"/>
<dbReference type="KEGG" id="mmu:23928"/>
<dbReference type="UCSC" id="uc008jef.1">
    <property type="organism name" value="mouse"/>
</dbReference>
<dbReference type="AGR" id="MGI:1344394"/>
<dbReference type="CTD" id="10319"/>
<dbReference type="MGI" id="MGI:1344394">
    <property type="gene designation" value="Lamc3"/>
</dbReference>
<dbReference type="VEuPathDB" id="HostDB:ENSMUSG00000026840"/>
<dbReference type="eggNOG" id="KOG1836">
    <property type="taxonomic scope" value="Eukaryota"/>
</dbReference>
<dbReference type="GeneTree" id="ENSGT00940000161559"/>
<dbReference type="InParanoid" id="Q9R0B6"/>
<dbReference type="OMA" id="GAQKTCT"/>
<dbReference type="OrthoDB" id="430826at2759"/>
<dbReference type="PhylomeDB" id="Q9R0B6"/>
<dbReference type="TreeFam" id="TF352481"/>
<dbReference type="BioGRID-ORCS" id="23928">
    <property type="hits" value="3 hits in 77 CRISPR screens"/>
</dbReference>
<dbReference type="ChiTaRS" id="Lamc3">
    <property type="organism name" value="mouse"/>
</dbReference>
<dbReference type="PRO" id="PR:Q9R0B6"/>
<dbReference type="Proteomes" id="UP000000589">
    <property type="component" value="Chromosome 2"/>
</dbReference>
<dbReference type="RNAct" id="Q9R0B6">
    <property type="molecule type" value="protein"/>
</dbReference>
<dbReference type="Bgee" id="ENSMUSG00000026840">
    <property type="expression patterns" value="Expressed in meninx of hindbrain and 83 other cell types or tissues"/>
</dbReference>
<dbReference type="ExpressionAtlas" id="Q9R0B6">
    <property type="expression patterns" value="baseline and differential"/>
</dbReference>
<dbReference type="GO" id="GO:0005604">
    <property type="term" value="C:basement membrane"/>
    <property type="evidence" value="ECO:0000314"/>
    <property type="project" value="MGI"/>
</dbReference>
<dbReference type="GO" id="GO:0005576">
    <property type="term" value="C:extracellular region"/>
    <property type="evidence" value="ECO:0000304"/>
    <property type="project" value="Reactome"/>
</dbReference>
<dbReference type="GO" id="GO:0014002">
    <property type="term" value="P:astrocyte development"/>
    <property type="evidence" value="ECO:0000316"/>
    <property type="project" value="MGI"/>
</dbReference>
<dbReference type="GO" id="GO:0007155">
    <property type="term" value="P:cell adhesion"/>
    <property type="evidence" value="ECO:0007669"/>
    <property type="project" value="UniProtKB-KW"/>
</dbReference>
<dbReference type="GO" id="GO:0000902">
    <property type="term" value="P:cell morphogenesis"/>
    <property type="evidence" value="ECO:0000316"/>
    <property type="project" value="MGI"/>
</dbReference>
<dbReference type="GO" id="GO:0060041">
    <property type="term" value="P:retina development in camera-type eye"/>
    <property type="evidence" value="ECO:0000316"/>
    <property type="project" value="MGI"/>
</dbReference>
<dbReference type="GO" id="GO:0007601">
    <property type="term" value="P:visual perception"/>
    <property type="evidence" value="ECO:0000316"/>
    <property type="project" value="MGI"/>
</dbReference>
<dbReference type="CDD" id="cd00055">
    <property type="entry name" value="EGF_Lam"/>
    <property type="match status" value="10"/>
</dbReference>
<dbReference type="FunFam" id="2.10.25.10:FF:000067">
    <property type="entry name" value="Laminin subunit gamma 1"/>
    <property type="match status" value="2"/>
</dbReference>
<dbReference type="FunFam" id="2.10.25.10:FF:000193">
    <property type="entry name" value="Laminin subunit gamma 1"/>
    <property type="match status" value="1"/>
</dbReference>
<dbReference type="FunFam" id="2.60.120.260:FF:000018">
    <property type="entry name" value="Laminin subunit gamma 1"/>
    <property type="match status" value="1"/>
</dbReference>
<dbReference type="FunFam" id="2.10.25.10:FF:000433">
    <property type="entry name" value="Laminin subunit gamma 3"/>
    <property type="match status" value="1"/>
</dbReference>
<dbReference type="FunFam" id="2.10.25.10:FF:000174">
    <property type="entry name" value="Laminin subunit gamma-1"/>
    <property type="match status" value="1"/>
</dbReference>
<dbReference type="FunFam" id="2.10.25.10:FF:000105">
    <property type="entry name" value="laminin subunit gamma-1"/>
    <property type="match status" value="1"/>
</dbReference>
<dbReference type="FunFam" id="2.10.25.10:FF:000163">
    <property type="entry name" value="laminin subunit gamma-1"/>
    <property type="match status" value="1"/>
</dbReference>
<dbReference type="FunFam" id="2.10.25.10:FF:000166">
    <property type="entry name" value="laminin subunit gamma-1"/>
    <property type="match status" value="1"/>
</dbReference>
<dbReference type="FunFam" id="2.10.25.10:FF:000224">
    <property type="entry name" value="Usherin"/>
    <property type="match status" value="1"/>
</dbReference>
<dbReference type="Gene3D" id="2.60.120.260">
    <property type="entry name" value="Galactose-binding domain-like"/>
    <property type="match status" value="1"/>
</dbReference>
<dbReference type="Gene3D" id="2.10.25.10">
    <property type="entry name" value="Laminin"/>
    <property type="match status" value="9"/>
</dbReference>
<dbReference type="InterPro" id="IPR000742">
    <property type="entry name" value="EGF-like_dom"/>
</dbReference>
<dbReference type="InterPro" id="IPR050440">
    <property type="entry name" value="Laminin/Netrin_ECM"/>
</dbReference>
<dbReference type="InterPro" id="IPR000034">
    <property type="entry name" value="Laminin_IV"/>
</dbReference>
<dbReference type="InterPro" id="IPR008211">
    <property type="entry name" value="Laminin_N"/>
</dbReference>
<dbReference type="InterPro" id="IPR002049">
    <property type="entry name" value="LE_dom"/>
</dbReference>
<dbReference type="InterPro" id="IPR056863">
    <property type="entry name" value="LMN_ATRN_NET-like_EGF"/>
</dbReference>
<dbReference type="PANTHER" id="PTHR10574:SF406">
    <property type="entry name" value="LAMININ SUBUNIT ALPHA 5"/>
    <property type="match status" value="1"/>
</dbReference>
<dbReference type="PANTHER" id="PTHR10574">
    <property type="entry name" value="NETRIN/LAMININ-RELATED"/>
    <property type="match status" value="1"/>
</dbReference>
<dbReference type="Pfam" id="PF00053">
    <property type="entry name" value="EGF_laminin"/>
    <property type="match status" value="8"/>
</dbReference>
<dbReference type="Pfam" id="PF24973">
    <property type="entry name" value="EGF_LMN_ATRN"/>
    <property type="match status" value="3"/>
</dbReference>
<dbReference type="Pfam" id="PF00052">
    <property type="entry name" value="Laminin_B"/>
    <property type="match status" value="1"/>
</dbReference>
<dbReference type="Pfam" id="PF00055">
    <property type="entry name" value="Laminin_N"/>
    <property type="match status" value="1"/>
</dbReference>
<dbReference type="PRINTS" id="PR00011">
    <property type="entry name" value="EGFLAMININ"/>
</dbReference>
<dbReference type="SMART" id="SM00181">
    <property type="entry name" value="EGF"/>
    <property type="match status" value="6"/>
</dbReference>
<dbReference type="SMART" id="SM00180">
    <property type="entry name" value="EGF_Lam"/>
    <property type="match status" value="11"/>
</dbReference>
<dbReference type="SMART" id="SM00281">
    <property type="entry name" value="LamB"/>
    <property type="match status" value="1"/>
</dbReference>
<dbReference type="SMART" id="SM00136">
    <property type="entry name" value="LamNT"/>
    <property type="match status" value="1"/>
</dbReference>
<dbReference type="SUPFAM" id="SSF57196">
    <property type="entry name" value="EGF/Laminin"/>
    <property type="match status" value="10"/>
</dbReference>
<dbReference type="PROSITE" id="PS00022">
    <property type="entry name" value="EGF_1"/>
    <property type="match status" value="8"/>
</dbReference>
<dbReference type="PROSITE" id="PS01186">
    <property type="entry name" value="EGF_2"/>
    <property type="match status" value="2"/>
</dbReference>
<dbReference type="PROSITE" id="PS01248">
    <property type="entry name" value="EGF_LAM_1"/>
    <property type="match status" value="11"/>
</dbReference>
<dbReference type="PROSITE" id="PS50027">
    <property type="entry name" value="EGF_LAM_2"/>
    <property type="match status" value="10"/>
</dbReference>
<dbReference type="PROSITE" id="PS51115">
    <property type="entry name" value="LAMININ_IVA"/>
    <property type="match status" value="1"/>
</dbReference>
<dbReference type="PROSITE" id="PS51117">
    <property type="entry name" value="LAMININ_NTER"/>
    <property type="match status" value="1"/>
</dbReference>
<sequence>MAVSRVLSLLATVASMALVIQETHFAAGADMGSCYDGVGRAQRCLPEFENAAFGRRAEASHTCGRPPEDFCPHVGAPGAGLQCQRCDDADPGRRHDASYLTDFHSPDDSTWWQSPSMAFGVQYPTSVNLTLSLGKAYEITYVRLKFHTSRPESFAIYKRTYASGPWEPYQYYSASCQKTYGRPEGHYLRPGEDERVAFCTSEFSDISPLNGGNVAFSTLEGRPSAYNFEESPVLQEWVTSTDILISLDRLNTFGDDIFKDPRVLQSYYYAVSDFSVGGRCKCNGHASECEPNAAGQLACRCQHNTTGVDCERCLPFFQDRPWARGTAEDANECLPCNCSGHSEECTFDRELYRSTGHGGHCQRCRDHTTGPHCERCEKNYYRWSPKTPCQPCDCHPAGSLSLQCDNSGVCPCKPTVTGWKCDRCLPGFHSLSEGGCRPCACNVAGSLGTCDPRSGNCPCKENVEGSLCDRCRPGTFNLQPHNPVGCSSCFCYGHSKVCSPAAGFQEHHIRSDFRHGAGGWQIRSMGVSKRPLQWSQSGLLLGLRGGEELSAPKKFLGDQRLSYGQPVILTLQVPPGGSPPPIQLRLEGAGLALSLRPSSLPSPQDTRQPRRVQLQFLLQETSEEAESPLPTFHFQRLLSNLTALSIWTSGQGPGHSGQVLLCEVQLTSAWPQRELAPPASWVETCLCPQGYTGQFCEFCALGYKREIPHGGPYANCIPCTCNQHGTCDPNTGICLCGHHTEGPSCERCMPGFYGNAFSGRADDCQPCPCPGQSACATIPESGDVVCTHCPPGQRGRRCESCEDGFFGDPLGLSGAPQPCRRCQCSGNVDLNAVGNCDPHSGHCLRCLYNTTGAHCEHCREGFYGSAVATRPVDKCAPCSCDLRGSVSEKTCNPVTGQCVCLPYVSGRDCSRCSPGFYDLQSGRGCQSCKCHPLGSLENKCHPKTGQCPCRPGVTGQACDRCQLGFFGFSIKGCRDCRCSPLGAASSQCHENSTCVCRPGFVGYKCDRCQDNFFLADGDTGCQECPTCYALVKEEAAKLKARLMLMEGWLQRSDCGSPWGPLDILQGEAPLGDVYQGHHLLQETRGTFLQQMVGLEDSVKATWEQLQVLRGHVHCAQAGAQKTCIQLAELEETLQSSEEEVLRAASALSFLASLQKGSSTPTNWSHLASEAQILARSHRDTATKIEATSERALLASNASYELLKLMEGRVASEAQQELEDRYQEVQAAQTALGIAVAEALPKAEKALATVKQVIGDAAPHLGLLVTPEAMNFQARGLSWKVKALEQKLEQKEPEVGQSVGALQVEAGRALEKMEPFMQLRNKTTAAFTRASSAVQAAKVTVIGAETLLADLEGMKLRSPLPKEQAALKKKAGSIRTRLLEDTKRKTKQAERMLGNAASLSSSTKKKSKEAELMSKDNAKLSRALLREGKQGYRHASRLASQTQATLRRASRLLLTSEAHKQELEEAKQVTSGLSTVERQIRESRISLEKDTKVLSELLVKLGSLGVHQAPAQTLNETQRALESLRLQLDSHGALHHKLRQLEEESARQELQIQSFEDDLAEIRADKHNLETILSSLPENCAS</sequence>
<keyword id="KW-0084">Basement membrane</keyword>
<keyword id="KW-0130">Cell adhesion</keyword>
<keyword id="KW-0175">Coiled coil</keyword>
<keyword id="KW-1015">Disulfide bond</keyword>
<keyword id="KW-0272">Extracellular matrix</keyword>
<keyword id="KW-0325">Glycoprotein</keyword>
<keyword id="KW-0424">Laminin EGF-like domain</keyword>
<keyword id="KW-1185">Reference proteome</keyword>
<keyword id="KW-0677">Repeat</keyword>
<keyword id="KW-0964">Secreted</keyword>
<keyword id="KW-0732">Signal</keyword>
<gene>
    <name type="primary">Lamc3</name>
</gene>
<protein>
    <recommendedName>
        <fullName>Laminin subunit gamma-3</fullName>
    </recommendedName>
    <alternativeName>
        <fullName>Laminin-12 subunit gamma</fullName>
    </alternativeName>
    <alternativeName>
        <fullName>Laminin-14 subunit gamma</fullName>
    </alternativeName>
    <alternativeName>
        <fullName>Laminin-15 subunit gamma</fullName>
    </alternativeName>
</protein>
<feature type="signal peptide" evidence="1">
    <location>
        <begin position="1"/>
        <end position="28"/>
    </location>
</feature>
<feature type="chain" id="PRO_0000017080" description="Laminin subunit gamma-3">
    <location>
        <begin position="29"/>
        <end position="1581"/>
    </location>
</feature>
<feature type="domain" description="Laminin N-terminal" evidence="4">
    <location>
        <begin position="40"/>
        <end position="279"/>
    </location>
</feature>
<feature type="domain" description="Laminin EGF-like 1" evidence="3">
    <location>
        <begin position="280"/>
        <end position="335"/>
    </location>
</feature>
<feature type="domain" description="Laminin EGF-like 2" evidence="3">
    <location>
        <begin position="336"/>
        <end position="391"/>
    </location>
</feature>
<feature type="domain" description="Laminin EGF-like 3" evidence="3">
    <location>
        <begin position="392"/>
        <end position="438"/>
    </location>
</feature>
<feature type="domain" description="Laminin EGF-like 4" evidence="3">
    <location>
        <begin position="439"/>
        <end position="488"/>
    </location>
</feature>
<feature type="domain" description="Laminin EGF-like 5; first part" evidence="3">
    <location>
        <begin position="489"/>
        <end position="498"/>
    </location>
</feature>
<feature type="domain" description="Laminin IV type A" evidence="2">
    <location>
        <begin position="508"/>
        <end position="684"/>
    </location>
</feature>
<feature type="domain" description="Laminin EGF-like 5; second part" evidence="3">
    <location>
        <begin position="685"/>
        <end position="718"/>
    </location>
</feature>
<feature type="domain" description="Laminin EGF-like 6" evidence="3">
    <location>
        <begin position="719"/>
        <end position="766"/>
    </location>
</feature>
<feature type="domain" description="Laminin EGF-like 7" evidence="3">
    <location>
        <begin position="767"/>
        <end position="821"/>
    </location>
</feature>
<feature type="domain" description="Laminin EGF-like 8" evidence="3">
    <location>
        <begin position="822"/>
        <end position="877"/>
    </location>
</feature>
<feature type="domain" description="Laminin EGF-like 9" evidence="3">
    <location>
        <begin position="878"/>
        <end position="927"/>
    </location>
</feature>
<feature type="domain" description="Laminin EGF-like 10" evidence="3">
    <location>
        <begin position="928"/>
        <end position="975"/>
    </location>
</feature>
<feature type="domain" description="Laminin EGF-like 11" evidence="3">
    <location>
        <begin position="976"/>
        <end position="1024"/>
    </location>
</feature>
<feature type="region of interest" description="Domain II and I">
    <location>
        <begin position="1025"/>
        <end position="1581"/>
    </location>
</feature>
<feature type="region of interest" description="Disordered" evidence="5">
    <location>
        <begin position="1382"/>
        <end position="1413"/>
    </location>
</feature>
<feature type="coiled-coil region" evidence="1">
    <location>
        <begin position="1029"/>
        <end position="1046"/>
    </location>
</feature>
<feature type="coiled-coil region" evidence="1">
    <location>
        <begin position="1112"/>
        <end position="1153"/>
    </location>
</feature>
<feature type="coiled-coil region" evidence="1">
    <location>
        <begin position="1208"/>
        <end position="1231"/>
    </location>
</feature>
<feature type="coiled-coil region" evidence="1">
    <location>
        <begin position="1438"/>
        <end position="1468"/>
    </location>
</feature>
<feature type="coiled-coil region" evidence="1">
    <location>
        <begin position="1510"/>
        <end position="1575"/>
    </location>
</feature>
<feature type="glycosylation site" description="N-linked (GlcNAc...) asparagine" evidence="1">
    <location>
        <position position="128"/>
    </location>
</feature>
<feature type="glycosylation site" description="N-linked (GlcNAc...) asparagine" evidence="1">
    <location>
        <position position="304"/>
    </location>
</feature>
<feature type="glycosylation site" description="N-linked (GlcNAc...) asparagine" evidence="1">
    <location>
        <position position="337"/>
    </location>
</feature>
<feature type="glycosylation site" description="N-linked (GlcNAc...) asparagine" evidence="1">
    <location>
        <position position="640"/>
    </location>
</feature>
<feature type="glycosylation site" description="N-linked (GlcNAc...) asparagine" evidence="1">
    <location>
        <position position="849"/>
    </location>
</feature>
<feature type="glycosylation site" description="N-linked (GlcNAc...) asparagine" evidence="1">
    <location>
        <position position="991"/>
    </location>
</feature>
<feature type="glycosylation site" description="N-linked (GlcNAc...) asparagine" evidence="1">
    <location>
        <position position="1162"/>
    </location>
</feature>
<feature type="glycosylation site" description="N-linked (GlcNAc...) asparagine" evidence="1">
    <location>
        <position position="1196"/>
    </location>
</feature>
<feature type="glycosylation site" description="N-linked (GlcNAc...) asparagine" evidence="1">
    <location>
        <position position="1320"/>
    </location>
</feature>
<feature type="glycosylation site" description="N-linked (GlcNAc...) asparagine" evidence="1">
    <location>
        <position position="1514"/>
    </location>
</feature>
<feature type="disulfide bond" evidence="3">
    <location>
        <begin position="280"/>
        <end position="289"/>
    </location>
</feature>
<feature type="disulfide bond" evidence="3">
    <location>
        <begin position="282"/>
        <end position="299"/>
    </location>
</feature>
<feature type="disulfide bond" evidence="3">
    <location>
        <begin position="301"/>
        <end position="310"/>
    </location>
</feature>
<feature type="disulfide bond" evidence="3">
    <location>
        <begin position="313"/>
        <end position="333"/>
    </location>
</feature>
<feature type="disulfide bond" evidence="3">
    <location>
        <begin position="336"/>
        <end position="345"/>
    </location>
</feature>
<feature type="disulfide bond" evidence="3">
    <location>
        <begin position="338"/>
        <end position="361"/>
    </location>
</feature>
<feature type="disulfide bond" evidence="3">
    <location>
        <begin position="364"/>
        <end position="373"/>
    </location>
</feature>
<feature type="disulfide bond" evidence="3">
    <location>
        <begin position="376"/>
        <end position="389"/>
    </location>
</feature>
<feature type="disulfide bond" evidence="3">
    <location>
        <begin position="392"/>
        <end position="404"/>
    </location>
</feature>
<feature type="disulfide bond" evidence="3">
    <location>
        <begin position="394"/>
        <end position="410"/>
    </location>
</feature>
<feature type="disulfide bond" evidence="3">
    <location>
        <begin position="412"/>
        <end position="421"/>
    </location>
</feature>
<feature type="disulfide bond" evidence="3">
    <location>
        <begin position="424"/>
        <end position="436"/>
    </location>
</feature>
<feature type="disulfide bond" evidence="3">
    <location>
        <begin position="439"/>
        <end position="450"/>
    </location>
</feature>
<feature type="disulfide bond" evidence="3">
    <location>
        <begin position="441"/>
        <end position="457"/>
    </location>
</feature>
<feature type="disulfide bond" evidence="3">
    <location>
        <begin position="459"/>
        <end position="468"/>
    </location>
</feature>
<feature type="disulfide bond" evidence="3">
    <location>
        <begin position="471"/>
        <end position="486"/>
    </location>
</feature>
<feature type="disulfide bond" evidence="3">
    <location>
        <begin position="719"/>
        <end position="727"/>
    </location>
</feature>
<feature type="disulfide bond" evidence="3">
    <location>
        <begin position="721"/>
        <end position="734"/>
    </location>
</feature>
<feature type="disulfide bond" evidence="3">
    <location>
        <begin position="736"/>
        <end position="745"/>
    </location>
</feature>
<feature type="disulfide bond" evidence="3">
    <location>
        <begin position="748"/>
        <end position="764"/>
    </location>
</feature>
<feature type="disulfide bond" evidence="3">
    <location>
        <begin position="767"/>
        <end position="775"/>
    </location>
</feature>
<feature type="disulfide bond" evidence="3">
    <location>
        <begin position="769"/>
        <end position="786"/>
    </location>
</feature>
<feature type="disulfide bond" evidence="3">
    <location>
        <begin position="789"/>
        <end position="798"/>
    </location>
</feature>
<feature type="disulfide bond" evidence="3">
    <location>
        <begin position="801"/>
        <end position="819"/>
    </location>
</feature>
<feature type="disulfide bond" evidence="3">
    <location>
        <begin position="822"/>
        <end position="836"/>
    </location>
</feature>
<feature type="disulfide bond" evidence="3">
    <location>
        <begin position="824"/>
        <end position="843"/>
    </location>
</feature>
<feature type="disulfide bond" evidence="3">
    <location>
        <begin position="846"/>
        <end position="855"/>
    </location>
</feature>
<feature type="disulfide bond" evidence="3">
    <location>
        <begin position="858"/>
        <end position="875"/>
    </location>
</feature>
<feature type="disulfide bond" evidence="3">
    <location>
        <begin position="878"/>
        <end position="891"/>
    </location>
</feature>
<feature type="disulfide bond" evidence="3">
    <location>
        <begin position="880"/>
        <end position="898"/>
    </location>
</feature>
<feature type="disulfide bond" evidence="3">
    <location>
        <begin position="900"/>
        <end position="909"/>
    </location>
</feature>
<feature type="disulfide bond" evidence="3">
    <location>
        <begin position="912"/>
        <end position="925"/>
    </location>
</feature>
<feature type="disulfide bond" evidence="3">
    <location>
        <begin position="928"/>
        <end position="940"/>
    </location>
</feature>
<feature type="disulfide bond" evidence="3">
    <location>
        <begin position="930"/>
        <end position="947"/>
    </location>
</feature>
<feature type="disulfide bond" evidence="3">
    <location>
        <begin position="949"/>
        <end position="958"/>
    </location>
</feature>
<feature type="disulfide bond" evidence="3">
    <location>
        <begin position="961"/>
        <end position="973"/>
    </location>
</feature>
<feature type="disulfide bond" evidence="3">
    <location>
        <begin position="976"/>
        <end position="988"/>
    </location>
</feature>
<feature type="disulfide bond" evidence="3">
    <location>
        <begin position="978"/>
        <end position="994"/>
    </location>
</feature>
<feature type="disulfide bond" evidence="3">
    <location>
        <begin position="996"/>
        <end position="1005"/>
    </location>
</feature>
<feature type="disulfide bond" evidence="3">
    <location>
        <begin position="1008"/>
        <end position="1021"/>
    </location>
</feature>
<feature type="sequence conflict" description="In Ref. 5; AAD29851." evidence="6" ref="5">
    <original>L</original>
    <variation>F</variation>
    <location>
        <position position="9"/>
    </location>
</feature>
<feature type="sequence conflict" description="In Ref. 5; AAD29851." evidence="6" ref="5">
    <original>P</original>
    <variation>T</variation>
    <location>
        <position position="190"/>
    </location>
</feature>
<feature type="sequence conflict" description="In Ref. 5; AAD29851." evidence="6" ref="5">
    <original>R</original>
    <variation>K</variation>
    <location>
        <position position="195"/>
    </location>
</feature>
<feature type="sequence conflict" description="In Ref. 5; AAD29851." evidence="6" ref="5">
    <original>G</original>
    <variation>S</variation>
    <location>
        <position position="221"/>
    </location>
</feature>
<feature type="sequence conflict" description="In Ref. 5; AAD29851." evidence="6" ref="5">
    <original>C</original>
    <variation>R</variation>
    <location>
        <position position="394"/>
    </location>
</feature>
<feature type="sequence conflict" description="In Ref. 5; AAD29851." evidence="6" ref="5">
    <original>C</original>
    <variation>Y</variation>
    <location>
        <position position="471"/>
    </location>
</feature>
<feature type="sequence conflict" description="In Ref. 5; AAD29851." evidence="6" ref="5">
    <original>L</original>
    <variation>LDEPQLFSLLLK</variation>
    <location>
        <position position="1150"/>
    </location>
</feature>
<feature type="sequence conflict" description="In Ref. 1; AAF08983." evidence="6" ref="1">
    <original>Q</original>
    <variation>H</variation>
    <location>
        <position position="1387"/>
    </location>
</feature>
<feature type="sequence conflict" description="In Ref. 5; AAD29851." evidence="6" ref="5">
    <original>AS</original>
    <variation>TI</variation>
    <location>
        <begin position="1438"/>
        <end position="1439"/>
    </location>
</feature>
<feature type="sequence conflict" description="In Ref. 1; AAF08983." evidence="6" ref="1">
    <original>I</original>
    <variation>V</variation>
    <location>
        <position position="1479"/>
    </location>
</feature>
<name>LAMC3_MOUSE</name>
<comment type="function">
    <text>Binding to cells via a high affinity receptor, laminin is thought to mediate the attachment, migration and organization of cells into tissues during embryonic development by interacting with other extracellular matrix components.</text>
</comment>
<comment type="subunit">
    <text>Laminin is a complex glycoprotein, consisting of three different polypeptide chains (alpha, beta, gamma), which are bound to each other by disulfide bonds into a cross-shaped molecule comprising one long and three short arms with globules at each end. Gamma-3 is a subunit of laminin-12 (laminin-213), laminin-14 (laminin-423) and laminin-15 (laminin-523).</text>
</comment>
<comment type="subcellular location">
    <subcellularLocation>
        <location>Secreted</location>
        <location>Extracellular space</location>
        <location>Extracellular matrix</location>
        <location>Basement membrane</location>
    </subcellularLocation>
</comment>
<comment type="tissue specificity">
    <text>Strongly expressed in capillaries and arterioles of kidney as well as in interstitial Leydig cells of testis.</text>
</comment>
<comment type="domain">
    <text>The alpha-helical domains I and II are thought to interact with other laminin chains to form a coiled coil structure.</text>
</comment>
<comment type="domain">
    <text>Domain IV is globular.</text>
</comment>
<organism>
    <name type="scientific">Mus musculus</name>
    <name type="common">Mouse</name>
    <dbReference type="NCBI Taxonomy" id="10090"/>
    <lineage>
        <taxon>Eukaryota</taxon>
        <taxon>Metazoa</taxon>
        <taxon>Chordata</taxon>
        <taxon>Craniata</taxon>
        <taxon>Vertebrata</taxon>
        <taxon>Euteleostomi</taxon>
        <taxon>Mammalia</taxon>
        <taxon>Eutheria</taxon>
        <taxon>Euarchontoglires</taxon>
        <taxon>Glires</taxon>
        <taxon>Rodentia</taxon>
        <taxon>Myomorpha</taxon>
        <taxon>Muroidea</taxon>
        <taxon>Muridae</taxon>
        <taxon>Murinae</taxon>
        <taxon>Mus</taxon>
        <taxon>Mus</taxon>
    </lineage>
</organism>
<evidence type="ECO:0000255" key="1"/>
<evidence type="ECO:0000255" key="2">
    <source>
        <dbReference type="PROSITE-ProRule" id="PRU00458"/>
    </source>
</evidence>
<evidence type="ECO:0000255" key="3">
    <source>
        <dbReference type="PROSITE-ProRule" id="PRU00460"/>
    </source>
</evidence>
<evidence type="ECO:0000255" key="4">
    <source>
        <dbReference type="PROSITE-ProRule" id="PRU00466"/>
    </source>
</evidence>
<evidence type="ECO:0000256" key="5">
    <source>
        <dbReference type="SAM" id="MobiDB-lite"/>
    </source>
</evidence>
<evidence type="ECO:0000305" key="6"/>
<accession>Q9R0B6</accession>
<accession>Q4VAI3</accession>
<accession>Q9WTW6</accession>
<proteinExistence type="evidence at protein level"/>